<accession>Q9JWV4</accession>
<accession>A1IP75</accession>
<dbReference type="EMBL" id="AL157959">
    <property type="protein sequence ID" value="CAM07534.1"/>
    <property type="molecule type" value="Genomic_DNA"/>
</dbReference>
<dbReference type="PIR" id="H82016">
    <property type="entry name" value="H82016"/>
</dbReference>
<dbReference type="RefSeq" id="WP_002237430.1">
    <property type="nucleotide sequence ID" value="NC_003116.1"/>
</dbReference>
<dbReference type="SMR" id="Q9JWV4"/>
<dbReference type="EnsemblBacteria" id="CAM07534">
    <property type="protein sequence ID" value="CAM07534"/>
    <property type="gene ID" value="NMA0224"/>
</dbReference>
<dbReference type="KEGG" id="nma:NMA0224"/>
<dbReference type="HOGENOM" id="CLU_036856_6_0_4"/>
<dbReference type="Proteomes" id="UP000000626">
    <property type="component" value="Chromosome"/>
</dbReference>
<dbReference type="GO" id="GO:0005737">
    <property type="term" value="C:cytoplasm"/>
    <property type="evidence" value="ECO:0007669"/>
    <property type="project" value="UniProtKB-SubCell"/>
</dbReference>
<dbReference type="GO" id="GO:0016149">
    <property type="term" value="F:translation release factor activity, codon specific"/>
    <property type="evidence" value="ECO:0007669"/>
    <property type="project" value="UniProtKB-UniRule"/>
</dbReference>
<dbReference type="FunFam" id="3.30.160.20:FF:000010">
    <property type="entry name" value="Peptide chain release factor 2"/>
    <property type="match status" value="1"/>
</dbReference>
<dbReference type="Gene3D" id="3.30.160.20">
    <property type="match status" value="1"/>
</dbReference>
<dbReference type="Gene3D" id="3.30.70.1660">
    <property type="match status" value="1"/>
</dbReference>
<dbReference type="Gene3D" id="1.20.58.410">
    <property type="entry name" value="Release factor"/>
    <property type="match status" value="1"/>
</dbReference>
<dbReference type="HAMAP" id="MF_00094">
    <property type="entry name" value="Rel_fac_2"/>
    <property type="match status" value="1"/>
</dbReference>
<dbReference type="InterPro" id="IPR005139">
    <property type="entry name" value="PCRF"/>
</dbReference>
<dbReference type="InterPro" id="IPR000352">
    <property type="entry name" value="Pep_chain_release_fac_I"/>
</dbReference>
<dbReference type="InterPro" id="IPR045853">
    <property type="entry name" value="Pep_chain_release_fac_I_sf"/>
</dbReference>
<dbReference type="InterPro" id="IPR004374">
    <property type="entry name" value="PrfB"/>
</dbReference>
<dbReference type="NCBIfam" id="TIGR00020">
    <property type="entry name" value="prfB"/>
    <property type="match status" value="1"/>
</dbReference>
<dbReference type="PANTHER" id="PTHR43116:SF3">
    <property type="entry name" value="CLASS I PEPTIDE CHAIN RELEASE FACTOR"/>
    <property type="match status" value="1"/>
</dbReference>
<dbReference type="PANTHER" id="PTHR43116">
    <property type="entry name" value="PEPTIDE CHAIN RELEASE FACTOR 2"/>
    <property type="match status" value="1"/>
</dbReference>
<dbReference type="Pfam" id="PF03462">
    <property type="entry name" value="PCRF"/>
    <property type="match status" value="1"/>
</dbReference>
<dbReference type="Pfam" id="PF00472">
    <property type="entry name" value="RF-1"/>
    <property type="match status" value="1"/>
</dbReference>
<dbReference type="SMART" id="SM00937">
    <property type="entry name" value="PCRF"/>
    <property type="match status" value="1"/>
</dbReference>
<dbReference type="SUPFAM" id="SSF75620">
    <property type="entry name" value="Release factor"/>
    <property type="match status" value="1"/>
</dbReference>
<dbReference type="PROSITE" id="PS00745">
    <property type="entry name" value="RF_PROK_I"/>
    <property type="match status" value="1"/>
</dbReference>
<sequence>MEAEVINQLNNTLNDLEKRSEDIRVYMDYQGKKDRLEEVIGLSEDPELWNDPKRAQEIGKERKILEGIVLTLDNIATGIEDNRMLIEMTVEENDEEGFAAVQEDVAGLEKQMADLEFKRMFNQPADPNNCFIDITAGAGGTEAEDWAGMLFRMYSRYAERKGFKIEILEEDDGEIAGINRATIRVEGEYAYGLLRTETGVHRLVRYSPFDSNNKRHTSFASVFVYPEIDDSIEIEINPADLRIDTYRASGAGGQHINKTDSAVRITHEPTGIVVQCQNDRSQHANKAAAMEMLKSKLYELEMRKRNEEKQALEEGKSDVGWGSQIRSYVLDSSRIKDLRTGYEVGNTKAVLDGDLDGFIEASLKQGV</sequence>
<feature type="chain" id="PRO_0000166834" description="Peptide chain release factor 2">
    <location>
        <begin position="1"/>
        <end position="367"/>
    </location>
</feature>
<feature type="modified residue" description="N5-methylglutamine" evidence="1">
    <location>
        <position position="254"/>
    </location>
</feature>
<protein>
    <recommendedName>
        <fullName evidence="1">Peptide chain release factor 2</fullName>
        <shortName evidence="1">RF-2</shortName>
    </recommendedName>
</protein>
<evidence type="ECO:0000255" key="1">
    <source>
        <dbReference type="HAMAP-Rule" id="MF_00094"/>
    </source>
</evidence>
<reference key="1">
    <citation type="journal article" date="2000" name="Nature">
        <title>Complete DNA sequence of a serogroup A strain of Neisseria meningitidis Z2491.</title>
        <authorList>
            <person name="Parkhill J."/>
            <person name="Achtman M."/>
            <person name="James K.D."/>
            <person name="Bentley S.D."/>
            <person name="Churcher C.M."/>
            <person name="Klee S.R."/>
            <person name="Morelli G."/>
            <person name="Basham D."/>
            <person name="Brown D."/>
            <person name="Chillingworth T."/>
            <person name="Davies R.M."/>
            <person name="Davis P."/>
            <person name="Devlin K."/>
            <person name="Feltwell T."/>
            <person name="Hamlin N."/>
            <person name="Holroyd S."/>
            <person name="Jagels K."/>
            <person name="Leather S."/>
            <person name="Moule S."/>
            <person name="Mungall K.L."/>
            <person name="Quail M.A."/>
            <person name="Rajandream M.A."/>
            <person name="Rutherford K.M."/>
            <person name="Simmonds M."/>
            <person name="Skelton J."/>
            <person name="Whitehead S."/>
            <person name="Spratt B.G."/>
            <person name="Barrell B.G."/>
        </authorList>
    </citation>
    <scope>NUCLEOTIDE SEQUENCE [LARGE SCALE GENOMIC DNA]</scope>
    <source>
        <strain>DSM 15465 / Z2491</strain>
    </source>
</reference>
<comment type="function">
    <text evidence="1">Peptide chain release factor 2 directs the termination of translation in response to the peptide chain termination codons UGA and UAA.</text>
</comment>
<comment type="subcellular location">
    <subcellularLocation>
        <location evidence="1">Cytoplasm</location>
    </subcellularLocation>
</comment>
<comment type="PTM">
    <text evidence="1">Methylated by PrmC. Methylation increases the termination efficiency of RF2.</text>
</comment>
<comment type="similarity">
    <text evidence="1">Belongs to the prokaryotic/mitochondrial release factor family.</text>
</comment>
<name>RF2_NEIMA</name>
<proteinExistence type="inferred from homology"/>
<keyword id="KW-0963">Cytoplasm</keyword>
<keyword id="KW-0488">Methylation</keyword>
<keyword id="KW-0648">Protein biosynthesis</keyword>
<organism>
    <name type="scientific">Neisseria meningitidis serogroup A / serotype 4A (strain DSM 15465 / Z2491)</name>
    <dbReference type="NCBI Taxonomy" id="122587"/>
    <lineage>
        <taxon>Bacteria</taxon>
        <taxon>Pseudomonadati</taxon>
        <taxon>Pseudomonadota</taxon>
        <taxon>Betaproteobacteria</taxon>
        <taxon>Neisseriales</taxon>
        <taxon>Neisseriaceae</taxon>
        <taxon>Neisseria</taxon>
    </lineage>
</organism>
<gene>
    <name evidence="1" type="primary">prfB</name>
    <name type="ordered locus">NMA0224</name>
</gene>